<comment type="function">
    <text evidence="1">Involved in the biosynthesis of the chorismate, which leads to the biosynthesis of aromatic amino acids. Catalyzes the reversible NADPH linked reduction of 3-dehydroshikimate (DHSA) to yield shikimate (SA).</text>
</comment>
<comment type="catalytic activity">
    <reaction evidence="1">
        <text>shikimate + NADP(+) = 3-dehydroshikimate + NADPH + H(+)</text>
        <dbReference type="Rhea" id="RHEA:17737"/>
        <dbReference type="ChEBI" id="CHEBI:15378"/>
        <dbReference type="ChEBI" id="CHEBI:16630"/>
        <dbReference type="ChEBI" id="CHEBI:36208"/>
        <dbReference type="ChEBI" id="CHEBI:57783"/>
        <dbReference type="ChEBI" id="CHEBI:58349"/>
        <dbReference type="EC" id="1.1.1.25"/>
    </reaction>
</comment>
<comment type="pathway">
    <text evidence="1">Metabolic intermediate biosynthesis; chorismate biosynthesis; chorismate from D-erythrose 4-phosphate and phosphoenolpyruvate: step 4/7.</text>
</comment>
<comment type="subunit">
    <text evidence="1">Homodimer.</text>
</comment>
<comment type="similarity">
    <text evidence="1">Belongs to the shikimate dehydrogenase family.</text>
</comment>
<organism>
    <name type="scientific">Chlorobium phaeobacteroides (strain DSM 266 / SMG 266 / 2430)</name>
    <dbReference type="NCBI Taxonomy" id="290317"/>
    <lineage>
        <taxon>Bacteria</taxon>
        <taxon>Pseudomonadati</taxon>
        <taxon>Chlorobiota</taxon>
        <taxon>Chlorobiia</taxon>
        <taxon>Chlorobiales</taxon>
        <taxon>Chlorobiaceae</taxon>
        <taxon>Chlorobium/Pelodictyon group</taxon>
        <taxon>Chlorobium</taxon>
    </lineage>
</organism>
<proteinExistence type="inferred from homology"/>
<name>AROE_CHLPD</name>
<feature type="chain" id="PRO_1000021271" description="Shikimate dehydrogenase (NADP(+))">
    <location>
        <begin position="1"/>
        <end position="295"/>
    </location>
</feature>
<feature type="active site" description="Proton acceptor" evidence="1">
    <location>
        <position position="70"/>
    </location>
</feature>
<feature type="binding site" evidence="1">
    <location>
        <begin position="18"/>
        <end position="20"/>
    </location>
    <ligand>
        <name>shikimate</name>
        <dbReference type="ChEBI" id="CHEBI:36208"/>
    </ligand>
</feature>
<feature type="binding site" evidence="1">
    <location>
        <position position="66"/>
    </location>
    <ligand>
        <name>shikimate</name>
        <dbReference type="ChEBI" id="CHEBI:36208"/>
    </ligand>
</feature>
<feature type="binding site" evidence="1">
    <location>
        <position position="91"/>
    </location>
    <ligand>
        <name>shikimate</name>
        <dbReference type="ChEBI" id="CHEBI:36208"/>
    </ligand>
</feature>
<feature type="binding site" evidence="1">
    <location>
        <position position="106"/>
    </location>
    <ligand>
        <name>shikimate</name>
        <dbReference type="ChEBI" id="CHEBI:36208"/>
    </ligand>
</feature>
<feature type="binding site" evidence="1">
    <location>
        <begin position="130"/>
        <end position="134"/>
    </location>
    <ligand>
        <name>NADP(+)</name>
        <dbReference type="ChEBI" id="CHEBI:58349"/>
    </ligand>
</feature>
<feature type="binding site" evidence="1">
    <location>
        <position position="235"/>
    </location>
    <ligand>
        <name>NADP(+)</name>
        <dbReference type="ChEBI" id="CHEBI:58349"/>
    </ligand>
</feature>
<feature type="binding site" evidence="1">
    <location>
        <position position="237"/>
    </location>
    <ligand>
        <name>shikimate</name>
        <dbReference type="ChEBI" id="CHEBI:36208"/>
    </ligand>
</feature>
<feature type="binding site" evidence="1">
    <location>
        <position position="258"/>
    </location>
    <ligand>
        <name>NADP(+)</name>
        <dbReference type="ChEBI" id="CHEBI:58349"/>
    </ligand>
</feature>
<evidence type="ECO:0000255" key="1">
    <source>
        <dbReference type="HAMAP-Rule" id="MF_00222"/>
    </source>
</evidence>
<sequence length="295" mass="31608">MMQPEKILGLIGRNIAYSRSPLIHNTACDLLALPYVYTIFNIASADLIEPAIAGARALGIAGLNVTTPYKTTVVPFLDELSPEAASIGAVNTIVNNNGHLAGYNTDIAGFAAPLRPYAQRIKGNPVSVFGNGGAALAAIEAFRIFFHPCCVYLFVRDSAKASAMLENYVHRDIVTLCLIEELFSGESGAIAKIQRSLVIVNATPIGTAGRQNETETSILPLDTELLHPDHIVYDMVYNPLFTPLIKAAKASGAATISGIEMLLGQAARSFELWTGKEMPLEQVRAVLINNLLSSP</sequence>
<dbReference type="EC" id="1.1.1.25" evidence="1"/>
<dbReference type="EMBL" id="CP000492">
    <property type="protein sequence ID" value="ABL64763.1"/>
    <property type="molecule type" value="Genomic_DNA"/>
</dbReference>
<dbReference type="RefSeq" id="WP_011744593.1">
    <property type="nucleotide sequence ID" value="NC_008639.1"/>
</dbReference>
<dbReference type="SMR" id="A1BED6"/>
<dbReference type="STRING" id="290317.Cpha266_0708"/>
<dbReference type="KEGG" id="cph:Cpha266_0708"/>
<dbReference type="eggNOG" id="COG0169">
    <property type="taxonomic scope" value="Bacteria"/>
</dbReference>
<dbReference type="HOGENOM" id="CLU_044063_4_1_10"/>
<dbReference type="OrthoDB" id="9792692at2"/>
<dbReference type="UniPathway" id="UPA00053">
    <property type="reaction ID" value="UER00087"/>
</dbReference>
<dbReference type="Proteomes" id="UP000008701">
    <property type="component" value="Chromosome"/>
</dbReference>
<dbReference type="GO" id="GO:0050661">
    <property type="term" value="F:NADP binding"/>
    <property type="evidence" value="ECO:0007669"/>
    <property type="project" value="InterPro"/>
</dbReference>
<dbReference type="GO" id="GO:0004764">
    <property type="term" value="F:shikimate 3-dehydrogenase (NADP+) activity"/>
    <property type="evidence" value="ECO:0007669"/>
    <property type="project" value="UniProtKB-UniRule"/>
</dbReference>
<dbReference type="GO" id="GO:0008652">
    <property type="term" value="P:amino acid biosynthetic process"/>
    <property type="evidence" value="ECO:0007669"/>
    <property type="project" value="UniProtKB-KW"/>
</dbReference>
<dbReference type="GO" id="GO:0009073">
    <property type="term" value="P:aromatic amino acid family biosynthetic process"/>
    <property type="evidence" value="ECO:0007669"/>
    <property type="project" value="UniProtKB-KW"/>
</dbReference>
<dbReference type="GO" id="GO:0009423">
    <property type="term" value="P:chorismate biosynthetic process"/>
    <property type="evidence" value="ECO:0007669"/>
    <property type="project" value="UniProtKB-UniRule"/>
</dbReference>
<dbReference type="GO" id="GO:0019632">
    <property type="term" value="P:shikimate metabolic process"/>
    <property type="evidence" value="ECO:0007669"/>
    <property type="project" value="InterPro"/>
</dbReference>
<dbReference type="CDD" id="cd01065">
    <property type="entry name" value="NAD_bind_Shikimate_DH"/>
    <property type="match status" value="1"/>
</dbReference>
<dbReference type="Gene3D" id="3.40.50.10860">
    <property type="entry name" value="Leucine Dehydrogenase, chain A, domain 1"/>
    <property type="match status" value="1"/>
</dbReference>
<dbReference type="Gene3D" id="3.40.50.720">
    <property type="entry name" value="NAD(P)-binding Rossmann-like Domain"/>
    <property type="match status" value="1"/>
</dbReference>
<dbReference type="HAMAP" id="MF_00222">
    <property type="entry name" value="Shikimate_DH_AroE"/>
    <property type="match status" value="1"/>
</dbReference>
<dbReference type="InterPro" id="IPR046346">
    <property type="entry name" value="Aminoacid_DH-like_N_sf"/>
</dbReference>
<dbReference type="InterPro" id="IPR036291">
    <property type="entry name" value="NAD(P)-bd_dom_sf"/>
</dbReference>
<dbReference type="InterPro" id="IPR041121">
    <property type="entry name" value="SDH_C"/>
</dbReference>
<dbReference type="InterPro" id="IPR011342">
    <property type="entry name" value="Shikimate_DH"/>
</dbReference>
<dbReference type="InterPro" id="IPR013708">
    <property type="entry name" value="Shikimate_DH-bd_N"/>
</dbReference>
<dbReference type="InterPro" id="IPR022893">
    <property type="entry name" value="Shikimate_DH_fam"/>
</dbReference>
<dbReference type="NCBIfam" id="TIGR00507">
    <property type="entry name" value="aroE"/>
    <property type="match status" value="1"/>
</dbReference>
<dbReference type="PANTHER" id="PTHR21089:SF1">
    <property type="entry name" value="BIFUNCTIONAL 3-DEHYDROQUINATE DEHYDRATASE_SHIKIMATE DEHYDROGENASE, CHLOROPLASTIC"/>
    <property type="match status" value="1"/>
</dbReference>
<dbReference type="PANTHER" id="PTHR21089">
    <property type="entry name" value="SHIKIMATE DEHYDROGENASE"/>
    <property type="match status" value="1"/>
</dbReference>
<dbReference type="Pfam" id="PF18317">
    <property type="entry name" value="SDH_C"/>
    <property type="match status" value="1"/>
</dbReference>
<dbReference type="Pfam" id="PF08501">
    <property type="entry name" value="Shikimate_dh_N"/>
    <property type="match status" value="1"/>
</dbReference>
<dbReference type="SUPFAM" id="SSF53223">
    <property type="entry name" value="Aminoacid dehydrogenase-like, N-terminal domain"/>
    <property type="match status" value="1"/>
</dbReference>
<dbReference type="SUPFAM" id="SSF51735">
    <property type="entry name" value="NAD(P)-binding Rossmann-fold domains"/>
    <property type="match status" value="1"/>
</dbReference>
<reference key="1">
    <citation type="submission" date="2006-12" db="EMBL/GenBank/DDBJ databases">
        <title>Complete sequence of Chlorobium phaeobacteroides DSM 266.</title>
        <authorList>
            <consortium name="US DOE Joint Genome Institute"/>
            <person name="Copeland A."/>
            <person name="Lucas S."/>
            <person name="Lapidus A."/>
            <person name="Barry K."/>
            <person name="Detter J.C."/>
            <person name="Glavina del Rio T."/>
            <person name="Hammon N."/>
            <person name="Israni S."/>
            <person name="Pitluck S."/>
            <person name="Goltsman E."/>
            <person name="Schmutz J."/>
            <person name="Larimer F."/>
            <person name="Land M."/>
            <person name="Hauser L."/>
            <person name="Mikhailova N."/>
            <person name="Li T."/>
            <person name="Overmann J."/>
            <person name="Bryant D.A."/>
            <person name="Richardson P."/>
        </authorList>
    </citation>
    <scope>NUCLEOTIDE SEQUENCE [LARGE SCALE GENOMIC DNA]</scope>
    <source>
        <strain>DSM 266 / SMG 266 / 2430</strain>
    </source>
</reference>
<accession>A1BED6</accession>
<protein>
    <recommendedName>
        <fullName evidence="1">Shikimate dehydrogenase (NADP(+))</fullName>
        <shortName evidence="1">SDH</shortName>
        <ecNumber evidence="1">1.1.1.25</ecNumber>
    </recommendedName>
</protein>
<keyword id="KW-0028">Amino-acid biosynthesis</keyword>
<keyword id="KW-0057">Aromatic amino acid biosynthesis</keyword>
<keyword id="KW-0521">NADP</keyword>
<keyword id="KW-0560">Oxidoreductase</keyword>
<keyword id="KW-1185">Reference proteome</keyword>
<gene>
    <name evidence="1" type="primary">aroE</name>
    <name type="ordered locus">Cpha266_0708</name>
</gene>